<gene>
    <name evidence="1" type="primary">kup</name>
    <name type="ordered locus">YPN_0006</name>
    <name type="ORF">YP516_4531</name>
</gene>
<organism>
    <name type="scientific">Yersinia pestis bv. Antiqua (strain Nepal516)</name>
    <dbReference type="NCBI Taxonomy" id="377628"/>
    <lineage>
        <taxon>Bacteria</taxon>
        <taxon>Pseudomonadati</taxon>
        <taxon>Pseudomonadota</taxon>
        <taxon>Gammaproteobacteria</taxon>
        <taxon>Enterobacterales</taxon>
        <taxon>Yersiniaceae</taxon>
        <taxon>Yersinia</taxon>
    </lineage>
</organism>
<dbReference type="EMBL" id="CP000305">
    <property type="protein sequence ID" value="ABG16339.1"/>
    <property type="molecule type" value="Genomic_DNA"/>
</dbReference>
<dbReference type="EMBL" id="ACNQ01000019">
    <property type="protein sequence ID" value="EEO74921.1"/>
    <property type="molecule type" value="Genomic_DNA"/>
</dbReference>
<dbReference type="RefSeq" id="WP_002212253.1">
    <property type="nucleotide sequence ID" value="NZ_ACNQ01000019.1"/>
</dbReference>
<dbReference type="GeneID" id="57974588"/>
<dbReference type="KEGG" id="ypn:YPN_0006"/>
<dbReference type="HOGENOM" id="CLU_008142_4_2_6"/>
<dbReference type="Proteomes" id="UP000008936">
    <property type="component" value="Chromosome"/>
</dbReference>
<dbReference type="GO" id="GO:0005886">
    <property type="term" value="C:plasma membrane"/>
    <property type="evidence" value="ECO:0007669"/>
    <property type="project" value="UniProtKB-SubCell"/>
</dbReference>
<dbReference type="GO" id="GO:0015079">
    <property type="term" value="F:potassium ion transmembrane transporter activity"/>
    <property type="evidence" value="ECO:0007669"/>
    <property type="project" value="UniProtKB-UniRule"/>
</dbReference>
<dbReference type="GO" id="GO:0015293">
    <property type="term" value="F:symporter activity"/>
    <property type="evidence" value="ECO:0007669"/>
    <property type="project" value="UniProtKB-UniRule"/>
</dbReference>
<dbReference type="HAMAP" id="MF_01522">
    <property type="entry name" value="Kup"/>
    <property type="match status" value="1"/>
</dbReference>
<dbReference type="InterPro" id="IPR003855">
    <property type="entry name" value="K+_transporter"/>
</dbReference>
<dbReference type="InterPro" id="IPR053952">
    <property type="entry name" value="K_trans_C"/>
</dbReference>
<dbReference type="InterPro" id="IPR053951">
    <property type="entry name" value="K_trans_N"/>
</dbReference>
<dbReference type="InterPro" id="IPR023051">
    <property type="entry name" value="Kup"/>
</dbReference>
<dbReference type="NCBIfam" id="TIGR00794">
    <property type="entry name" value="kup"/>
    <property type="match status" value="1"/>
</dbReference>
<dbReference type="NCBIfam" id="NF008015">
    <property type="entry name" value="PRK10745.1"/>
    <property type="match status" value="1"/>
</dbReference>
<dbReference type="PANTHER" id="PTHR30540:SF79">
    <property type="entry name" value="LOW AFFINITY POTASSIUM TRANSPORT SYSTEM PROTEIN KUP"/>
    <property type="match status" value="1"/>
</dbReference>
<dbReference type="PANTHER" id="PTHR30540">
    <property type="entry name" value="OSMOTIC STRESS POTASSIUM TRANSPORTER"/>
    <property type="match status" value="1"/>
</dbReference>
<dbReference type="Pfam" id="PF02705">
    <property type="entry name" value="K_trans"/>
    <property type="match status" value="1"/>
</dbReference>
<dbReference type="Pfam" id="PF22776">
    <property type="entry name" value="K_trans_C"/>
    <property type="match status" value="1"/>
</dbReference>
<protein>
    <recommendedName>
        <fullName evidence="1">Low affinity potassium transport system protein Kup</fullName>
    </recommendedName>
    <alternativeName>
        <fullName evidence="1">Kup system potassium uptake protein</fullName>
    </alternativeName>
</protein>
<keyword id="KW-0997">Cell inner membrane</keyword>
<keyword id="KW-1003">Cell membrane</keyword>
<keyword id="KW-0406">Ion transport</keyword>
<keyword id="KW-0472">Membrane</keyword>
<keyword id="KW-0630">Potassium</keyword>
<keyword id="KW-0633">Potassium transport</keyword>
<keyword id="KW-0769">Symport</keyword>
<keyword id="KW-0812">Transmembrane</keyword>
<keyword id="KW-1133">Transmembrane helix</keyword>
<keyword id="KW-0813">Transport</keyword>
<proteinExistence type="inferred from homology"/>
<name>KUP_YERPN</name>
<sequence length="622" mass="69116">MSTEHKQYLSAVTLAAIGVVYGDIGTSPLYTLRECFSGHYGFDVRPDVVFGFLSLIFWMLILVVSVKYLTYVMRADNAGEGGILTLMSLAGRNTSSRATSILVVLGLIGGSFFYGEVVITPAISVMSAIEGLEIAAPALDPYIVPCSIAVLTLLFVIQKHGTGSVGKLFAPVMLVWFLTLALLGLRSIIANPEVLAALNPKWAISFFVEYKSVSFFALGAVVLAITGVEALYADMGHFGKFPIRLAWFTVVLPSLVLNYFGQGALLLKNPEAIKNPFFLLAPDWALIPLLILATLATVIASQAVISGVFSLTRQAVRLGYLPPMRIIHTSEMESGQIYIPVINWTLYLAVVLVIIGFERSSNLAAAYGIAVTGTMVITSILFCTVAWKNWHWNRFLVVFLLMVLLIIDIPMFSANVLKLFSGGWLPLSLGLVMFIIMTTWKSERFSLLRRMHEHSNSLEAMIASLEKSPPVRVPGTAVYMSRAMNVIPFALLHNLKHNKVLHERVVLLTMRTDDVPYVHNVERVTIEQLSPTFWRVVARYGWRETPNVAEIFHRCGLEGLSCQMMETSFFMSHESLILTKRPWHLFLRGKLFIALSRNALRAPDQFEIPPNRVIELGTQVEI</sequence>
<feature type="chain" id="PRO_0000279846" description="Low affinity potassium transport system protein Kup">
    <location>
        <begin position="1"/>
        <end position="622"/>
    </location>
</feature>
<feature type="transmembrane region" description="Helical" evidence="1">
    <location>
        <begin position="9"/>
        <end position="29"/>
    </location>
</feature>
<feature type="transmembrane region" description="Helical" evidence="1">
    <location>
        <begin position="46"/>
        <end position="66"/>
    </location>
</feature>
<feature type="transmembrane region" description="Helical" evidence="1">
    <location>
        <begin position="101"/>
        <end position="121"/>
    </location>
</feature>
<feature type="transmembrane region" description="Helical" evidence="1">
    <location>
        <begin position="137"/>
        <end position="157"/>
    </location>
</feature>
<feature type="transmembrane region" description="Helical" evidence="1">
    <location>
        <begin position="165"/>
        <end position="185"/>
    </location>
</feature>
<feature type="transmembrane region" description="Helical" evidence="1">
    <location>
        <begin position="213"/>
        <end position="233"/>
    </location>
</feature>
<feature type="transmembrane region" description="Helical" evidence="1">
    <location>
        <begin position="247"/>
        <end position="267"/>
    </location>
</feature>
<feature type="transmembrane region" description="Helical" evidence="1">
    <location>
        <begin position="276"/>
        <end position="296"/>
    </location>
</feature>
<feature type="transmembrane region" description="Helical" evidence="1">
    <location>
        <begin position="337"/>
        <end position="357"/>
    </location>
</feature>
<feature type="transmembrane region" description="Helical" evidence="1">
    <location>
        <begin position="363"/>
        <end position="383"/>
    </location>
</feature>
<feature type="transmembrane region" description="Helical" evidence="1">
    <location>
        <begin position="395"/>
        <end position="415"/>
    </location>
</feature>
<feature type="transmembrane region" description="Helical" evidence="1">
    <location>
        <begin position="416"/>
        <end position="436"/>
    </location>
</feature>
<evidence type="ECO:0000255" key="1">
    <source>
        <dbReference type="HAMAP-Rule" id="MF_01522"/>
    </source>
</evidence>
<comment type="function">
    <text evidence="1">Responsible for the low-affinity transport of potassium into the cell. Likely operates as a K(+):H(+) symporter.</text>
</comment>
<comment type="catalytic activity">
    <reaction evidence="1">
        <text>K(+)(in) + H(+)(in) = K(+)(out) + H(+)(out)</text>
        <dbReference type="Rhea" id="RHEA:28490"/>
        <dbReference type="ChEBI" id="CHEBI:15378"/>
        <dbReference type="ChEBI" id="CHEBI:29103"/>
    </reaction>
    <physiologicalReaction direction="right-to-left" evidence="1">
        <dbReference type="Rhea" id="RHEA:28492"/>
    </physiologicalReaction>
</comment>
<comment type="subcellular location">
    <subcellularLocation>
        <location evidence="1">Cell inner membrane</location>
        <topology evidence="1">Multi-pass membrane protein</topology>
    </subcellularLocation>
</comment>
<comment type="similarity">
    <text evidence="1">Belongs to the HAK/KUP transporter (TC 2.A.72) family.</text>
</comment>
<reference key="1">
    <citation type="journal article" date="2006" name="J. Bacteriol.">
        <title>Complete genome sequence of Yersinia pestis strains Antiqua and Nepal516: evidence of gene reduction in an emerging pathogen.</title>
        <authorList>
            <person name="Chain P.S.G."/>
            <person name="Hu P."/>
            <person name="Malfatti S.A."/>
            <person name="Radnedge L."/>
            <person name="Larimer F."/>
            <person name="Vergez L.M."/>
            <person name="Worsham P."/>
            <person name="Chu M.C."/>
            <person name="Andersen G.L."/>
        </authorList>
    </citation>
    <scope>NUCLEOTIDE SEQUENCE [LARGE SCALE GENOMIC DNA]</scope>
    <source>
        <strain>Nepal516</strain>
    </source>
</reference>
<reference key="2">
    <citation type="submission" date="2009-04" db="EMBL/GenBank/DDBJ databases">
        <title>Yersinia pestis Nepal516A whole genome shotgun sequencing project.</title>
        <authorList>
            <person name="Plunkett G. III"/>
            <person name="Anderson B.D."/>
            <person name="Baumler D.J."/>
            <person name="Burland V."/>
            <person name="Cabot E.L."/>
            <person name="Glasner J.D."/>
            <person name="Mau B."/>
            <person name="Neeno-Eckwall E."/>
            <person name="Perna N.T."/>
            <person name="Munk A.C."/>
            <person name="Tapia R."/>
            <person name="Green L.D."/>
            <person name="Rogers Y.C."/>
            <person name="Detter J.C."/>
            <person name="Bruce D.C."/>
            <person name="Brettin T.S."/>
        </authorList>
    </citation>
    <scope>NUCLEOTIDE SEQUENCE [LARGE SCALE GENOMIC DNA]</scope>
    <source>
        <strain>Nepal516</strain>
    </source>
</reference>
<accession>Q1CNU1</accession>
<accession>D1Q318</accession>